<gene>
    <name evidence="1" type="primary">sufS</name>
    <name type="ordered locus">ECED1_1879</name>
</gene>
<sequence>MTFSVDKVRADFPVLSREVNGLPLAYLDSAASAQKPSQVIDAEAEFYRHGYAAVHRGIHTLSAQATEKMENVRKRASLFINARSAEELVFVRGTTEGINLVANSWGNSNVRAGDNIIISQMEHHANIVPWQMLCARVGAELRVIPLNPDGTLQLETLPTLFDEKTRLLAITHVSNVLGTENPLAEMITLAHQHGAKVLVDGAQAVMHHPVDVQALDCDFYVFSGHKLYGPTGIGILYVKEALLQEMPPWEGGGSMIATVSLSEGTTWTKAPWRFEAGTPNTGGIIGLGAALEYVSALGLNNIAEYEQNLMHYALSQLESVPDLTLYGPQNRLGVIAFNLGKHHAYDVGSFLDNYGIAVRTGHHCAMPLMAYYNVPAMCRASLAMYNTHEEVDRLVTGLQRIHRLLG</sequence>
<protein>
    <recommendedName>
        <fullName evidence="1">Cysteine desulfurase</fullName>
        <ecNumber evidence="1">2.8.1.7</ecNumber>
    </recommendedName>
    <alternativeName>
        <fullName evidence="1">Selenocysteine beta-lyase</fullName>
        <shortName evidence="1">SCL</shortName>
    </alternativeName>
    <alternativeName>
        <fullName evidence="1">Selenocysteine lyase</fullName>
        <ecNumber evidence="1">4.4.1.16</ecNumber>
    </alternativeName>
    <alternativeName>
        <fullName evidence="1">Selenocysteine reductase</fullName>
    </alternativeName>
</protein>
<proteinExistence type="inferred from homology"/>
<dbReference type="EC" id="2.8.1.7" evidence="1"/>
<dbReference type="EC" id="4.4.1.16" evidence="1"/>
<dbReference type="EMBL" id="CU928162">
    <property type="protein sequence ID" value="CAR07975.1"/>
    <property type="molecule type" value="Genomic_DNA"/>
</dbReference>
<dbReference type="RefSeq" id="WP_000144575.1">
    <property type="nucleotide sequence ID" value="NC_011745.1"/>
</dbReference>
<dbReference type="SMR" id="B7MV59"/>
<dbReference type="GeneID" id="75204526"/>
<dbReference type="KEGG" id="ecq:ECED1_1879"/>
<dbReference type="HOGENOM" id="CLU_003433_2_5_6"/>
<dbReference type="UniPathway" id="UPA00266"/>
<dbReference type="Proteomes" id="UP000000748">
    <property type="component" value="Chromosome"/>
</dbReference>
<dbReference type="GO" id="GO:0005737">
    <property type="term" value="C:cytoplasm"/>
    <property type="evidence" value="ECO:0007669"/>
    <property type="project" value="UniProtKB-SubCell"/>
</dbReference>
<dbReference type="GO" id="GO:0031071">
    <property type="term" value="F:cysteine desulfurase activity"/>
    <property type="evidence" value="ECO:0007669"/>
    <property type="project" value="UniProtKB-UniRule"/>
</dbReference>
<dbReference type="GO" id="GO:0030170">
    <property type="term" value="F:pyridoxal phosphate binding"/>
    <property type="evidence" value="ECO:0007669"/>
    <property type="project" value="InterPro"/>
</dbReference>
<dbReference type="GO" id="GO:0009000">
    <property type="term" value="F:selenocysteine lyase activity"/>
    <property type="evidence" value="ECO:0007669"/>
    <property type="project" value="UniProtKB-UniRule"/>
</dbReference>
<dbReference type="GO" id="GO:0006534">
    <property type="term" value="P:cysteine metabolic process"/>
    <property type="evidence" value="ECO:0007669"/>
    <property type="project" value="InterPro"/>
</dbReference>
<dbReference type="CDD" id="cd06453">
    <property type="entry name" value="SufS_like"/>
    <property type="match status" value="1"/>
</dbReference>
<dbReference type="FunFam" id="3.40.640.10:FF:000042">
    <property type="entry name" value="Cysteine desulfurase"/>
    <property type="match status" value="1"/>
</dbReference>
<dbReference type="Gene3D" id="3.90.1150.10">
    <property type="entry name" value="Aspartate Aminotransferase, domain 1"/>
    <property type="match status" value="1"/>
</dbReference>
<dbReference type="Gene3D" id="3.40.640.10">
    <property type="entry name" value="Type I PLP-dependent aspartate aminotransferase-like (Major domain)"/>
    <property type="match status" value="1"/>
</dbReference>
<dbReference type="HAMAP" id="MF_01831">
    <property type="entry name" value="SufS_aminotrans_5"/>
    <property type="match status" value="1"/>
</dbReference>
<dbReference type="InterPro" id="IPR000192">
    <property type="entry name" value="Aminotrans_V_dom"/>
</dbReference>
<dbReference type="InterPro" id="IPR020578">
    <property type="entry name" value="Aminotrans_V_PyrdxlP_BS"/>
</dbReference>
<dbReference type="InterPro" id="IPR010970">
    <property type="entry name" value="Cys_dSase_SufS"/>
</dbReference>
<dbReference type="InterPro" id="IPR015424">
    <property type="entry name" value="PyrdxlP-dep_Trfase"/>
</dbReference>
<dbReference type="InterPro" id="IPR015421">
    <property type="entry name" value="PyrdxlP-dep_Trfase_major"/>
</dbReference>
<dbReference type="InterPro" id="IPR015422">
    <property type="entry name" value="PyrdxlP-dep_Trfase_small"/>
</dbReference>
<dbReference type="NCBIfam" id="NF006791">
    <property type="entry name" value="PRK09295.1"/>
    <property type="match status" value="1"/>
</dbReference>
<dbReference type="NCBIfam" id="TIGR01979">
    <property type="entry name" value="sufS"/>
    <property type="match status" value="1"/>
</dbReference>
<dbReference type="PANTHER" id="PTHR43586">
    <property type="entry name" value="CYSTEINE DESULFURASE"/>
    <property type="match status" value="1"/>
</dbReference>
<dbReference type="PANTHER" id="PTHR43586:SF25">
    <property type="entry name" value="CYSTEINE DESULFURASE"/>
    <property type="match status" value="1"/>
</dbReference>
<dbReference type="Pfam" id="PF00266">
    <property type="entry name" value="Aminotran_5"/>
    <property type="match status" value="1"/>
</dbReference>
<dbReference type="SUPFAM" id="SSF53383">
    <property type="entry name" value="PLP-dependent transferases"/>
    <property type="match status" value="1"/>
</dbReference>
<dbReference type="PROSITE" id="PS00595">
    <property type="entry name" value="AA_TRANSFER_CLASS_5"/>
    <property type="match status" value="1"/>
</dbReference>
<accession>B7MV59</accession>
<reference key="1">
    <citation type="journal article" date="2009" name="PLoS Genet.">
        <title>Organised genome dynamics in the Escherichia coli species results in highly diverse adaptive paths.</title>
        <authorList>
            <person name="Touchon M."/>
            <person name="Hoede C."/>
            <person name="Tenaillon O."/>
            <person name="Barbe V."/>
            <person name="Baeriswyl S."/>
            <person name="Bidet P."/>
            <person name="Bingen E."/>
            <person name="Bonacorsi S."/>
            <person name="Bouchier C."/>
            <person name="Bouvet O."/>
            <person name="Calteau A."/>
            <person name="Chiapello H."/>
            <person name="Clermont O."/>
            <person name="Cruveiller S."/>
            <person name="Danchin A."/>
            <person name="Diard M."/>
            <person name="Dossat C."/>
            <person name="Karoui M.E."/>
            <person name="Frapy E."/>
            <person name="Garry L."/>
            <person name="Ghigo J.M."/>
            <person name="Gilles A.M."/>
            <person name="Johnson J."/>
            <person name="Le Bouguenec C."/>
            <person name="Lescat M."/>
            <person name="Mangenot S."/>
            <person name="Martinez-Jehanne V."/>
            <person name="Matic I."/>
            <person name="Nassif X."/>
            <person name="Oztas S."/>
            <person name="Petit M.A."/>
            <person name="Pichon C."/>
            <person name="Rouy Z."/>
            <person name="Ruf C.S."/>
            <person name="Schneider D."/>
            <person name="Tourret J."/>
            <person name="Vacherie B."/>
            <person name="Vallenet D."/>
            <person name="Medigue C."/>
            <person name="Rocha E.P.C."/>
            <person name="Denamur E."/>
        </authorList>
    </citation>
    <scope>NUCLEOTIDE SEQUENCE [LARGE SCALE GENOMIC DNA]</scope>
    <source>
        <strain>ED1a</strain>
    </source>
</reference>
<keyword id="KW-0963">Cytoplasm</keyword>
<keyword id="KW-0456">Lyase</keyword>
<keyword id="KW-0663">Pyridoxal phosphate</keyword>
<keyword id="KW-0808">Transferase</keyword>
<name>SUFS_ECO81</name>
<feature type="chain" id="PRO_1000188296" description="Cysteine desulfurase">
    <location>
        <begin position="1"/>
        <end position="406"/>
    </location>
</feature>
<feature type="active site" description="Cysteine persulfide intermediate" evidence="1">
    <location>
        <position position="364"/>
    </location>
</feature>
<feature type="modified residue" description="N6-(pyridoxal phosphate)lysine" evidence="1">
    <location>
        <position position="226"/>
    </location>
</feature>
<organism>
    <name type="scientific">Escherichia coli O81 (strain ED1a)</name>
    <dbReference type="NCBI Taxonomy" id="585397"/>
    <lineage>
        <taxon>Bacteria</taxon>
        <taxon>Pseudomonadati</taxon>
        <taxon>Pseudomonadota</taxon>
        <taxon>Gammaproteobacteria</taxon>
        <taxon>Enterobacterales</taxon>
        <taxon>Enterobacteriaceae</taxon>
        <taxon>Escherichia</taxon>
    </lineage>
</organism>
<evidence type="ECO:0000255" key="1">
    <source>
        <dbReference type="HAMAP-Rule" id="MF_01831"/>
    </source>
</evidence>
<comment type="function">
    <text evidence="1">Cysteine desulfurases mobilize the sulfur from L-cysteine to yield L-alanine, an essential step in sulfur metabolism for biosynthesis of a variety of sulfur-containing biomolecules. Component of the suf operon, which is activated and required under specific conditions such as oxidative stress and iron limitation. Acts as a potent selenocysteine lyase in vitro, that mobilizes selenium from L-selenocysteine. Selenocysteine lyase activity is however unsure in vivo.</text>
</comment>
<comment type="catalytic activity">
    <reaction evidence="1">
        <text>(sulfur carrier)-H + L-cysteine = (sulfur carrier)-SH + L-alanine</text>
        <dbReference type="Rhea" id="RHEA:43892"/>
        <dbReference type="Rhea" id="RHEA-COMP:14737"/>
        <dbReference type="Rhea" id="RHEA-COMP:14739"/>
        <dbReference type="ChEBI" id="CHEBI:29917"/>
        <dbReference type="ChEBI" id="CHEBI:35235"/>
        <dbReference type="ChEBI" id="CHEBI:57972"/>
        <dbReference type="ChEBI" id="CHEBI:64428"/>
        <dbReference type="EC" id="2.8.1.7"/>
    </reaction>
</comment>
<comment type="catalytic activity">
    <reaction evidence="1">
        <text>L-selenocysteine + AH2 = hydrogenselenide + L-alanine + A + H(+)</text>
        <dbReference type="Rhea" id="RHEA:11632"/>
        <dbReference type="ChEBI" id="CHEBI:13193"/>
        <dbReference type="ChEBI" id="CHEBI:15378"/>
        <dbReference type="ChEBI" id="CHEBI:17499"/>
        <dbReference type="ChEBI" id="CHEBI:29317"/>
        <dbReference type="ChEBI" id="CHEBI:57843"/>
        <dbReference type="ChEBI" id="CHEBI:57972"/>
        <dbReference type="EC" id="4.4.1.16"/>
    </reaction>
</comment>
<comment type="cofactor">
    <cofactor evidence="1">
        <name>pyridoxal 5'-phosphate</name>
        <dbReference type="ChEBI" id="CHEBI:597326"/>
    </cofactor>
</comment>
<comment type="pathway">
    <text evidence="1">Cofactor biosynthesis; iron-sulfur cluster biosynthesis.</text>
</comment>
<comment type="subunit">
    <text evidence="1">Homodimer. Interacts with SufE and the SufBCD complex composed of SufB, SufC and SufD. The interaction with SufE is required to mediate the direct transfer of the sulfur atom from the S-sulfanylcysteine.</text>
</comment>
<comment type="subcellular location">
    <subcellularLocation>
        <location evidence="1">Cytoplasm</location>
    </subcellularLocation>
</comment>
<comment type="similarity">
    <text evidence="1">Belongs to the class-V pyridoxal-phosphate-dependent aminotransferase family. Csd subfamily.</text>
</comment>